<accession>P0A1A6</accession>
<accession>P15168</accession>
<accession>Q9L6T0</accession>
<gene>
    <name type="primary">ilvE</name>
    <name type="ordered locus">STY3654</name>
    <name type="ordered locus">t3395</name>
</gene>
<evidence type="ECO:0000250" key="1"/>
<evidence type="ECO:0000305" key="2"/>
<protein>
    <recommendedName>
        <fullName>Branched-chain-amino-acid aminotransferase</fullName>
        <shortName>BCAT</shortName>
        <ecNumber>2.6.1.42</ecNumber>
    </recommendedName>
    <alternativeName>
        <fullName>Transaminase B</fullName>
    </alternativeName>
</protein>
<sequence>MTTKKADYIWFNGEMVRWEDAKVHVMSHALHYGTSVFEGIRCYDSHKGPVVFRHREHMQRLRDSAKIYRFPVSQSIDELMEACRDVIRKNNLTSAYIRPLVFVGDVGMGVNPPPGYTTDVIIAAFPWGAYLGAEALDQGIDAMVSSWNRAAPNTIPTAAKAGGNYLSSLLVGSEARRHGYQEGIALDVNGYISEGAGENLFEVKDGVLFTPPFTSSALPGITRDAIIKLAKELGIEVREQVLSRESLYLADEVFMSGTAAEITPVRSVDGIQVGEGRCGPVTKRIQQAFFGLFTGETEDKWGWLDPVNS</sequence>
<dbReference type="EC" id="2.6.1.42"/>
<dbReference type="EMBL" id="AL513382">
    <property type="protein sequence ID" value="CAD09414.1"/>
    <property type="molecule type" value="Genomic_DNA"/>
</dbReference>
<dbReference type="EMBL" id="AE014613">
    <property type="protein sequence ID" value="AAO70919.1"/>
    <property type="molecule type" value="Genomic_DNA"/>
</dbReference>
<dbReference type="RefSeq" id="NP_457845.1">
    <property type="nucleotide sequence ID" value="NC_003198.1"/>
</dbReference>
<dbReference type="RefSeq" id="WP_000208528.1">
    <property type="nucleotide sequence ID" value="NZ_WSUR01000032.1"/>
</dbReference>
<dbReference type="SMR" id="P0A1A6"/>
<dbReference type="STRING" id="220341.gene:17587509"/>
<dbReference type="KEGG" id="stt:t3395"/>
<dbReference type="KEGG" id="sty:STY3654"/>
<dbReference type="PATRIC" id="fig|220341.7.peg.3723"/>
<dbReference type="eggNOG" id="COG0115">
    <property type="taxonomic scope" value="Bacteria"/>
</dbReference>
<dbReference type="HOGENOM" id="CLU_020844_3_1_6"/>
<dbReference type="OMA" id="LTEVFAC"/>
<dbReference type="OrthoDB" id="21319at2"/>
<dbReference type="UniPathway" id="UPA00047">
    <property type="reaction ID" value="UER00058"/>
</dbReference>
<dbReference type="UniPathway" id="UPA00048">
    <property type="reaction ID" value="UER00073"/>
</dbReference>
<dbReference type="UniPathway" id="UPA00049">
    <property type="reaction ID" value="UER00062"/>
</dbReference>
<dbReference type="Proteomes" id="UP000000541">
    <property type="component" value="Chromosome"/>
</dbReference>
<dbReference type="Proteomes" id="UP000002670">
    <property type="component" value="Chromosome"/>
</dbReference>
<dbReference type="GO" id="GO:0005829">
    <property type="term" value="C:cytosol"/>
    <property type="evidence" value="ECO:0007669"/>
    <property type="project" value="TreeGrafter"/>
</dbReference>
<dbReference type="GO" id="GO:0052656">
    <property type="term" value="F:L-isoleucine-2-oxoglutarate transaminase activity"/>
    <property type="evidence" value="ECO:0007669"/>
    <property type="project" value="RHEA"/>
</dbReference>
<dbReference type="GO" id="GO:0052654">
    <property type="term" value="F:L-leucine-2-oxoglutarate transaminase activity"/>
    <property type="evidence" value="ECO:0007669"/>
    <property type="project" value="RHEA"/>
</dbReference>
<dbReference type="GO" id="GO:0052655">
    <property type="term" value="F:L-valine-2-oxoglutarate transaminase activity"/>
    <property type="evidence" value="ECO:0007669"/>
    <property type="project" value="RHEA"/>
</dbReference>
<dbReference type="GO" id="GO:0006532">
    <property type="term" value="P:aspartate biosynthetic process"/>
    <property type="evidence" value="ECO:0007669"/>
    <property type="project" value="TreeGrafter"/>
</dbReference>
<dbReference type="GO" id="GO:0009097">
    <property type="term" value="P:isoleucine biosynthetic process"/>
    <property type="evidence" value="ECO:0007669"/>
    <property type="project" value="UniProtKB-UniPathway"/>
</dbReference>
<dbReference type="GO" id="GO:0009098">
    <property type="term" value="P:L-leucine biosynthetic process"/>
    <property type="evidence" value="ECO:0007669"/>
    <property type="project" value="UniProtKB-UniPathway"/>
</dbReference>
<dbReference type="GO" id="GO:0009099">
    <property type="term" value="P:L-valine biosynthetic process"/>
    <property type="evidence" value="ECO:0007669"/>
    <property type="project" value="UniProtKB-UniPathway"/>
</dbReference>
<dbReference type="CDD" id="cd01557">
    <property type="entry name" value="BCAT_beta_family"/>
    <property type="match status" value="1"/>
</dbReference>
<dbReference type="FunFam" id="3.20.10.10:FF:000001">
    <property type="entry name" value="Branched-chain-amino-acid aminotransferase"/>
    <property type="match status" value="1"/>
</dbReference>
<dbReference type="FunFam" id="3.30.470.10:FF:000001">
    <property type="entry name" value="Branched-chain-amino-acid aminotransferase"/>
    <property type="match status" value="1"/>
</dbReference>
<dbReference type="Gene3D" id="3.30.470.10">
    <property type="match status" value="1"/>
</dbReference>
<dbReference type="Gene3D" id="3.20.10.10">
    <property type="entry name" value="D-amino Acid Aminotransferase, subunit A, domain 2"/>
    <property type="match status" value="1"/>
</dbReference>
<dbReference type="InterPro" id="IPR001544">
    <property type="entry name" value="Aminotrans_IV"/>
</dbReference>
<dbReference type="InterPro" id="IPR018300">
    <property type="entry name" value="Aminotrans_IV_CS"/>
</dbReference>
<dbReference type="InterPro" id="IPR036038">
    <property type="entry name" value="Aminotransferase-like"/>
</dbReference>
<dbReference type="InterPro" id="IPR005785">
    <property type="entry name" value="B_amino_transI"/>
</dbReference>
<dbReference type="InterPro" id="IPR043132">
    <property type="entry name" value="BCAT-like_C"/>
</dbReference>
<dbReference type="InterPro" id="IPR043131">
    <property type="entry name" value="BCAT-like_N"/>
</dbReference>
<dbReference type="InterPro" id="IPR033939">
    <property type="entry name" value="BCAT_family"/>
</dbReference>
<dbReference type="InterPro" id="IPR050571">
    <property type="entry name" value="Class-IV_PLP-Dep_Aminotrnsfr"/>
</dbReference>
<dbReference type="NCBIfam" id="TIGR01122">
    <property type="entry name" value="ilvE_I"/>
    <property type="match status" value="1"/>
</dbReference>
<dbReference type="NCBIfam" id="NF005146">
    <property type="entry name" value="PRK06606.1"/>
    <property type="match status" value="1"/>
</dbReference>
<dbReference type="PANTHER" id="PTHR42743">
    <property type="entry name" value="AMINO-ACID AMINOTRANSFERASE"/>
    <property type="match status" value="1"/>
</dbReference>
<dbReference type="PANTHER" id="PTHR42743:SF11">
    <property type="entry name" value="AMINODEOXYCHORISMATE LYASE"/>
    <property type="match status" value="1"/>
</dbReference>
<dbReference type="Pfam" id="PF01063">
    <property type="entry name" value="Aminotran_4"/>
    <property type="match status" value="1"/>
</dbReference>
<dbReference type="SUPFAM" id="SSF56752">
    <property type="entry name" value="D-aminoacid aminotransferase-like PLP-dependent enzymes"/>
    <property type="match status" value="1"/>
</dbReference>
<dbReference type="PROSITE" id="PS00770">
    <property type="entry name" value="AA_TRANSFER_CLASS_4"/>
    <property type="match status" value="1"/>
</dbReference>
<reference key="1">
    <citation type="journal article" date="2001" name="Nature">
        <title>Complete genome sequence of a multiple drug resistant Salmonella enterica serovar Typhi CT18.</title>
        <authorList>
            <person name="Parkhill J."/>
            <person name="Dougan G."/>
            <person name="James K.D."/>
            <person name="Thomson N.R."/>
            <person name="Pickard D."/>
            <person name="Wain J."/>
            <person name="Churcher C.M."/>
            <person name="Mungall K.L."/>
            <person name="Bentley S.D."/>
            <person name="Holden M.T.G."/>
            <person name="Sebaihia M."/>
            <person name="Baker S."/>
            <person name="Basham D."/>
            <person name="Brooks K."/>
            <person name="Chillingworth T."/>
            <person name="Connerton P."/>
            <person name="Cronin A."/>
            <person name="Davis P."/>
            <person name="Davies R.M."/>
            <person name="Dowd L."/>
            <person name="White N."/>
            <person name="Farrar J."/>
            <person name="Feltwell T."/>
            <person name="Hamlin N."/>
            <person name="Haque A."/>
            <person name="Hien T.T."/>
            <person name="Holroyd S."/>
            <person name="Jagels K."/>
            <person name="Krogh A."/>
            <person name="Larsen T.S."/>
            <person name="Leather S."/>
            <person name="Moule S."/>
            <person name="O'Gaora P."/>
            <person name="Parry C."/>
            <person name="Quail M.A."/>
            <person name="Rutherford K.M."/>
            <person name="Simmonds M."/>
            <person name="Skelton J."/>
            <person name="Stevens K."/>
            <person name="Whitehead S."/>
            <person name="Barrell B.G."/>
        </authorList>
    </citation>
    <scope>NUCLEOTIDE SEQUENCE [LARGE SCALE GENOMIC DNA]</scope>
    <source>
        <strain>CT18</strain>
    </source>
</reference>
<reference key="2">
    <citation type="journal article" date="2003" name="J. Bacteriol.">
        <title>Comparative genomics of Salmonella enterica serovar Typhi strains Ty2 and CT18.</title>
        <authorList>
            <person name="Deng W."/>
            <person name="Liou S.-R."/>
            <person name="Plunkett G. III"/>
            <person name="Mayhew G.F."/>
            <person name="Rose D.J."/>
            <person name="Burland V."/>
            <person name="Kodoyianni V."/>
            <person name="Schwartz D.C."/>
            <person name="Blattner F.R."/>
        </authorList>
    </citation>
    <scope>NUCLEOTIDE SEQUENCE [LARGE SCALE GENOMIC DNA]</scope>
    <source>
        <strain>ATCC 700931 / Ty2</strain>
    </source>
</reference>
<feature type="initiator methionine" description="Removed" evidence="1">
    <location>
        <position position="1"/>
    </location>
</feature>
<feature type="chain" id="PRO_0000103265" description="Branched-chain-amino-acid aminotransferase">
    <location>
        <begin position="2"/>
        <end position="309"/>
    </location>
</feature>
<feature type="modified residue" description="N6-(pyridoxal phosphate)lysine" evidence="1">
    <location>
        <position position="160"/>
    </location>
</feature>
<keyword id="KW-0028">Amino-acid biosynthesis</keyword>
<keyword id="KW-0032">Aminotransferase</keyword>
<keyword id="KW-0100">Branched-chain amino acid biosynthesis</keyword>
<keyword id="KW-0663">Pyridoxal phosphate</keyword>
<keyword id="KW-0808">Transferase</keyword>
<proteinExistence type="inferred from homology"/>
<name>ILVE_SALTI</name>
<organism>
    <name type="scientific">Salmonella typhi</name>
    <dbReference type="NCBI Taxonomy" id="90370"/>
    <lineage>
        <taxon>Bacteria</taxon>
        <taxon>Pseudomonadati</taxon>
        <taxon>Pseudomonadota</taxon>
        <taxon>Gammaproteobacteria</taxon>
        <taxon>Enterobacterales</taxon>
        <taxon>Enterobacteriaceae</taxon>
        <taxon>Salmonella</taxon>
    </lineage>
</organism>
<comment type="function">
    <text evidence="1">Acts on leucine, isoleucine and valine.</text>
</comment>
<comment type="catalytic activity">
    <reaction>
        <text>L-leucine + 2-oxoglutarate = 4-methyl-2-oxopentanoate + L-glutamate</text>
        <dbReference type="Rhea" id="RHEA:18321"/>
        <dbReference type="ChEBI" id="CHEBI:16810"/>
        <dbReference type="ChEBI" id="CHEBI:17865"/>
        <dbReference type="ChEBI" id="CHEBI:29985"/>
        <dbReference type="ChEBI" id="CHEBI:57427"/>
        <dbReference type="EC" id="2.6.1.42"/>
    </reaction>
</comment>
<comment type="catalytic activity">
    <reaction>
        <text>L-isoleucine + 2-oxoglutarate = (S)-3-methyl-2-oxopentanoate + L-glutamate</text>
        <dbReference type="Rhea" id="RHEA:24801"/>
        <dbReference type="ChEBI" id="CHEBI:16810"/>
        <dbReference type="ChEBI" id="CHEBI:29985"/>
        <dbReference type="ChEBI" id="CHEBI:35146"/>
        <dbReference type="ChEBI" id="CHEBI:58045"/>
        <dbReference type="EC" id="2.6.1.42"/>
    </reaction>
</comment>
<comment type="catalytic activity">
    <reaction>
        <text>L-valine + 2-oxoglutarate = 3-methyl-2-oxobutanoate + L-glutamate</text>
        <dbReference type="Rhea" id="RHEA:24813"/>
        <dbReference type="ChEBI" id="CHEBI:11851"/>
        <dbReference type="ChEBI" id="CHEBI:16810"/>
        <dbReference type="ChEBI" id="CHEBI:29985"/>
        <dbReference type="ChEBI" id="CHEBI:57762"/>
        <dbReference type="EC" id="2.6.1.42"/>
    </reaction>
</comment>
<comment type="cofactor">
    <cofactor evidence="1">
        <name>pyridoxal 5'-phosphate</name>
        <dbReference type="ChEBI" id="CHEBI:597326"/>
    </cofactor>
</comment>
<comment type="pathway">
    <text>Amino-acid biosynthesis; L-isoleucine biosynthesis; L-isoleucine from 2-oxobutanoate: step 4/4.</text>
</comment>
<comment type="pathway">
    <text>Amino-acid biosynthesis; L-leucine biosynthesis; L-leucine from 3-methyl-2-oxobutanoate: step 4/4.</text>
</comment>
<comment type="pathway">
    <text>Amino-acid biosynthesis; L-valine biosynthesis; L-valine from pyruvate: step 4/4.</text>
</comment>
<comment type="subunit">
    <text evidence="1">Homohexamer.</text>
</comment>
<comment type="similarity">
    <text evidence="2">Belongs to the class-IV pyridoxal-phosphate-dependent aminotransferase family.</text>
</comment>